<feature type="chain" id="PRO_0000315785" description="Acetoacetyl-CoA synthetase">
    <location>
        <begin position="1"/>
        <end position="672"/>
    </location>
</feature>
<feature type="sequence conflict" description="In Ref. 1; BAB41151." evidence="3" ref="1">
    <original>P</original>
    <variation>A</variation>
    <location>
        <position position="7"/>
    </location>
</feature>
<feature type="sequence conflict" description="In Ref. 2; BAE01877." evidence="3" ref="2">
    <original>E</original>
    <variation>D</variation>
    <location>
        <position position="110"/>
    </location>
</feature>
<feature type="sequence conflict" description="In Ref. 2; BAE01877." evidence="3" ref="2">
    <original>A</original>
    <variation>V</variation>
    <location>
        <position position="271"/>
    </location>
</feature>
<feature type="sequence conflict" description="In Ref. 2; BAE01877." evidence="3" ref="2">
    <original>M</original>
    <variation>V</variation>
    <location>
        <position position="337"/>
    </location>
</feature>
<feature type="sequence conflict" description="In Ref. 1; BAB41151 and 2; BAE01877." evidence="3" ref="1 2">
    <original>S</original>
    <variation>G</variation>
    <location>
        <position position="400"/>
    </location>
</feature>
<feature type="sequence conflict" description="In Ref. 1; BAB41151 and 2; BAE01877." evidence="3" ref="1 2">
    <original>S</original>
    <variation>N</variation>
    <location>
        <position position="505"/>
    </location>
</feature>
<feature type="sequence conflict" description="In Ref. 2; BAE01877." evidence="3" ref="2">
    <original>F</original>
    <variation>Y</variation>
    <location>
        <position position="578"/>
    </location>
</feature>
<dbReference type="EC" id="6.2.1.16" evidence="2"/>
<dbReference type="EMBL" id="AB045989">
    <property type="protein sequence ID" value="BAB01571.1"/>
    <property type="molecule type" value="mRNA"/>
</dbReference>
<dbReference type="EMBL" id="AB060214">
    <property type="protein sequence ID" value="BAB41151.1"/>
    <property type="molecule type" value="mRNA"/>
</dbReference>
<dbReference type="EMBL" id="AB169796">
    <property type="protein sequence ID" value="BAE01877.1"/>
    <property type="molecule type" value="mRNA"/>
</dbReference>
<dbReference type="RefSeq" id="NP_001270939.1">
    <property type="nucleotide sequence ID" value="NM_001284010.1"/>
</dbReference>
<dbReference type="SMR" id="Q9N0E1"/>
<dbReference type="STRING" id="9541.ENSMFAP00000013533"/>
<dbReference type="Ensembl" id="ENSMFAT00000063482.2">
    <property type="protein sequence ID" value="ENSMFAP00000013533.2"/>
    <property type="gene ID" value="ENSMFAG00000028497.2"/>
</dbReference>
<dbReference type="eggNOG" id="KOG1175">
    <property type="taxonomic scope" value="Eukaryota"/>
</dbReference>
<dbReference type="GeneTree" id="ENSGT00940000156044"/>
<dbReference type="Proteomes" id="UP000233100">
    <property type="component" value="Chromosome 11"/>
</dbReference>
<dbReference type="Bgee" id="ENSMFAG00000028497">
    <property type="expression patterns" value="Expressed in frontal cortex and 13 other cell types or tissues"/>
</dbReference>
<dbReference type="GO" id="GO:0005829">
    <property type="term" value="C:cytosol"/>
    <property type="evidence" value="ECO:0007669"/>
    <property type="project" value="UniProtKB-SubCell"/>
</dbReference>
<dbReference type="GO" id="GO:0030729">
    <property type="term" value="F:acetoacetate-CoA ligase activity"/>
    <property type="evidence" value="ECO:0007669"/>
    <property type="project" value="UniProtKB-EC"/>
</dbReference>
<dbReference type="GO" id="GO:0005524">
    <property type="term" value="F:ATP binding"/>
    <property type="evidence" value="ECO:0007669"/>
    <property type="project" value="UniProtKB-KW"/>
</dbReference>
<dbReference type="GO" id="GO:0006631">
    <property type="term" value="P:fatty acid metabolic process"/>
    <property type="evidence" value="ECO:0007669"/>
    <property type="project" value="UniProtKB-KW"/>
</dbReference>
<dbReference type="GO" id="GO:0032024">
    <property type="term" value="P:positive regulation of insulin secretion"/>
    <property type="evidence" value="ECO:0007669"/>
    <property type="project" value="TreeGrafter"/>
</dbReference>
<dbReference type="CDD" id="cd05943">
    <property type="entry name" value="AACS"/>
    <property type="match status" value="1"/>
</dbReference>
<dbReference type="FunFam" id="3.40.50.12780:FF:000036">
    <property type="entry name" value="Acetoacetyl-CoA synthetase"/>
    <property type="match status" value="1"/>
</dbReference>
<dbReference type="FunFam" id="3.30.300.30:FF:000037">
    <property type="entry name" value="acetoacetyl-CoA synthetase"/>
    <property type="match status" value="1"/>
</dbReference>
<dbReference type="Gene3D" id="3.30.300.30">
    <property type="match status" value="1"/>
</dbReference>
<dbReference type="Gene3D" id="3.40.50.12780">
    <property type="entry name" value="N-terminal domain of ligase-like"/>
    <property type="match status" value="1"/>
</dbReference>
<dbReference type="InterPro" id="IPR005914">
    <property type="entry name" value="Acac_CoA_synth"/>
</dbReference>
<dbReference type="InterPro" id="IPR032387">
    <property type="entry name" value="ACAS_N"/>
</dbReference>
<dbReference type="InterPro" id="IPR045851">
    <property type="entry name" value="AMP-bd_C_sf"/>
</dbReference>
<dbReference type="InterPro" id="IPR020845">
    <property type="entry name" value="AMP-binding_CS"/>
</dbReference>
<dbReference type="InterPro" id="IPR000873">
    <property type="entry name" value="AMP-dep_synth/lig_dom"/>
</dbReference>
<dbReference type="InterPro" id="IPR042099">
    <property type="entry name" value="ANL_N_sf"/>
</dbReference>
<dbReference type="NCBIfam" id="TIGR01217">
    <property type="entry name" value="ac_ac_CoA_syn"/>
    <property type="match status" value="1"/>
</dbReference>
<dbReference type="NCBIfam" id="NF002937">
    <property type="entry name" value="PRK03584.1"/>
    <property type="match status" value="1"/>
</dbReference>
<dbReference type="PANTHER" id="PTHR42921">
    <property type="entry name" value="ACETOACETYL-COA SYNTHETASE"/>
    <property type="match status" value="1"/>
</dbReference>
<dbReference type="PANTHER" id="PTHR42921:SF1">
    <property type="entry name" value="ACETOACETYL-COA SYNTHETASE"/>
    <property type="match status" value="1"/>
</dbReference>
<dbReference type="Pfam" id="PF16177">
    <property type="entry name" value="ACAS_N"/>
    <property type="match status" value="1"/>
</dbReference>
<dbReference type="Pfam" id="PF00501">
    <property type="entry name" value="AMP-binding"/>
    <property type="match status" value="1"/>
</dbReference>
<dbReference type="SUPFAM" id="SSF56801">
    <property type="entry name" value="Acetyl-CoA synthetase-like"/>
    <property type="match status" value="1"/>
</dbReference>
<dbReference type="PROSITE" id="PS00455">
    <property type="entry name" value="AMP_BINDING"/>
    <property type="match status" value="1"/>
</dbReference>
<evidence type="ECO:0000250" key="1">
    <source>
        <dbReference type="UniProtKB" id="Q9D2R0"/>
    </source>
</evidence>
<evidence type="ECO:0000250" key="2">
    <source>
        <dbReference type="UniProtKB" id="Q9JMI1"/>
    </source>
</evidence>
<evidence type="ECO:0000305" key="3"/>
<name>AACS_MACFA</name>
<gene>
    <name type="primary">AACS</name>
    <name type="ORF">QccE-10783</name>
    <name type="ORF">QccE-14415</name>
    <name type="ORF">QflA-13650</name>
</gene>
<protein>
    <recommendedName>
        <fullName>Acetoacetyl-CoA synthetase</fullName>
        <ecNumber evidence="2">6.2.1.16</ecNumber>
    </recommendedName>
</protein>
<comment type="function">
    <text evidence="1 2">Converts acetoacetate to acetoacetyl-CoA in the cytosol (By similarity). Ketone body-utilizing enzyme, responsible for the synthesis of cholesterol and fatty acids (By similarity).</text>
</comment>
<comment type="catalytic activity">
    <reaction evidence="2">
        <text>acetoacetate + ATP + CoA = acetoacetyl-CoA + AMP + diphosphate</text>
        <dbReference type="Rhea" id="RHEA:16117"/>
        <dbReference type="ChEBI" id="CHEBI:13705"/>
        <dbReference type="ChEBI" id="CHEBI:30616"/>
        <dbReference type="ChEBI" id="CHEBI:33019"/>
        <dbReference type="ChEBI" id="CHEBI:57286"/>
        <dbReference type="ChEBI" id="CHEBI:57287"/>
        <dbReference type="ChEBI" id="CHEBI:456215"/>
        <dbReference type="EC" id="6.2.1.16"/>
    </reaction>
    <physiologicalReaction direction="left-to-right" evidence="2">
        <dbReference type="Rhea" id="RHEA:16118"/>
    </physiologicalReaction>
</comment>
<comment type="subcellular location">
    <subcellularLocation>
        <location evidence="2">Cytoplasm</location>
        <location evidence="2">Cytosol</location>
    </subcellularLocation>
</comment>
<comment type="similarity">
    <text evidence="3">Belongs to the ATP-dependent AMP-binding enzyme family.</text>
</comment>
<accession>Q9N0E1</accession>
<accession>Q4R4U8</accession>
<accession>Q9BE28</accession>
<sequence>MSKEERPGREEILECQVMWEPDSKKNTQMDRFRAAVGAACGLALENYDDLYRWSVESYSDFWAEFWKFSGIVFSRAYDEVVDTSKGIADVPEWFKGSRLNYAENLLRHKENDRVALYVAREGKEEIVKVTFEELRQEVALFAAAMRKMGVKKGDRVVGYLPNSEHAVEAMLAAASIGAIWSSTSPDFGVNGVLDRFSQIQPKLIFSVEAVVYNGKEHSHMEKLQQVVKGLPDLKKVVVIPYVSSREKIDLSKIPNSVFLDDFLATGTSEQAPQLEFEQLPFSHPLFIMFSSGTTGAPKCMVHSAGGTLIQHLKEHLLHGNMTSSDILLCYTTAGWMMWNWMVSILATGAAMVLYDGSPLVPTPNVLWDLVDRIGITVLVTGAKWLSVLEEKAMKPVETHSLQMLHTILSTGSPLKAQSYEYVYRCIKSSILLGSISGGTDIISCFMGHNFSLPVYKGEIQARNLGMAVEAWNEEGKAVWGESGELVCTKPIPCQPTHFWNDENGSKYRKAYFSKFPGIWAHGDYCRINPKTGGIIMLGRSDGTLNPNGVRFGSSEIYNIVESFEEVEDSLCVPQYNKFREERVILFLKMASGHAFQPDLVKRIRDAIRVGLSARHVPSLILETKGIPYTLNGKKVEVAVKQIIAGKAVEQGGAFSNPETLDLYRDIPELQGF</sequence>
<organism>
    <name type="scientific">Macaca fascicularis</name>
    <name type="common">Crab-eating macaque</name>
    <name type="synonym">Cynomolgus monkey</name>
    <dbReference type="NCBI Taxonomy" id="9541"/>
    <lineage>
        <taxon>Eukaryota</taxon>
        <taxon>Metazoa</taxon>
        <taxon>Chordata</taxon>
        <taxon>Craniata</taxon>
        <taxon>Vertebrata</taxon>
        <taxon>Euteleostomi</taxon>
        <taxon>Mammalia</taxon>
        <taxon>Eutheria</taxon>
        <taxon>Euarchontoglires</taxon>
        <taxon>Primates</taxon>
        <taxon>Haplorrhini</taxon>
        <taxon>Catarrhini</taxon>
        <taxon>Cercopithecidae</taxon>
        <taxon>Cercopithecinae</taxon>
        <taxon>Macaca</taxon>
    </lineage>
</organism>
<keyword id="KW-0067">ATP-binding</keyword>
<keyword id="KW-0963">Cytoplasm</keyword>
<keyword id="KW-0276">Fatty acid metabolism</keyword>
<keyword id="KW-0436">Ligase</keyword>
<keyword id="KW-0443">Lipid metabolism</keyword>
<keyword id="KW-0547">Nucleotide-binding</keyword>
<keyword id="KW-1185">Reference proteome</keyword>
<reference key="1">
    <citation type="submission" date="2001-04" db="EMBL/GenBank/DDBJ databases">
        <title>Isolation of full-length cDNA clones from macaque brain cDNA libraries.</title>
        <authorList>
            <person name="Osada N."/>
            <person name="Hida M."/>
            <person name="Kusuda J."/>
            <person name="Tanuma R."/>
            <person name="Iseki K."/>
            <person name="Hirai M."/>
            <person name="Terao K."/>
            <person name="Suzuki Y."/>
            <person name="Sugano S."/>
            <person name="Hashimoto K."/>
        </authorList>
    </citation>
    <scope>NUCLEOTIDE SEQUENCE [LARGE SCALE MRNA]</scope>
    <source>
        <tissue>Brain cortex</tissue>
        <tissue>Frontal cortex</tissue>
    </source>
</reference>
<reference key="2">
    <citation type="submission" date="2005-06" db="EMBL/GenBank/DDBJ databases">
        <title>DNA sequences of macaque genes expressed in brain or testis and its evolutionary implications.</title>
        <authorList>
            <consortium name="International consortium for macaque cDNA sequencing and analysis"/>
        </authorList>
    </citation>
    <scope>NUCLEOTIDE SEQUENCE [LARGE SCALE MRNA]</scope>
    <source>
        <tissue>Brain cortex</tissue>
    </source>
</reference>
<proteinExistence type="evidence at transcript level"/>